<keyword id="KW-1185">Reference proteome</keyword>
<keyword id="KW-0687">Ribonucleoprotein</keyword>
<keyword id="KW-0689">Ribosomal protein</keyword>
<keyword id="KW-0694">RNA-binding</keyword>
<keyword id="KW-0699">rRNA-binding</keyword>
<proteinExistence type="inferred from homology"/>
<dbReference type="EMBL" id="AE017143">
    <property type="protein sequence ID" value="AAP96677.1"/>
    <property type="molecule type" value="Genomic_DNA"/>
</dbReference>
<dbReference type="RefSeq" id="WP_010945703.1">
    <property type="nucleotide sequence ID" value="NC_002940.2"/>
</dbReference>
<dbReference type="SMR" id="Q7VKF2"/>
<dbReference type="STRING" id="233412.HD_1959"/>
<dbReference type="GeneID" id="60733562"/>
<dbReference type="KEGG" id="hdu:HD_1959"/>
<dbReference type="eggNOG" id="COG0200">
    <property type="taxonomic scope" value="Bacteria"/>
</dbReference>
<dbReference type="HOGENOM" id="CLU_055188_4_2_6"/>
<dbReference type="OrthoDB" id="9810293at2"/>
<dbReference type="Proteomes" id="UP000001022">
    <property type="component" value="Chromosome"/>
</dbReference>
<dbReference type="GO" id="GO:0022625">
    <property type="term" value="C:cytosolic large ribosomal subunit"/>
    <property type="evidence" value="ECO:0007669"/>
    <property type="project" value="TreeGrafter"/>
</dbReference>
<dbReference type="GO" id="GO:0019843">
    <property type="term" value="F:rRNA binding"/>
    <property type="evidence" value="ECO:0007669"/>
    <property type="project" value="UniProtKB-UniRule"/>
</dbReference>
<dbReference type="GO" id="GO:0003735">
    <property type="term" value="F:structural constituent of ribosome"/>
    <property type="evidence" value="ECO:0007669"/>
    <property type="project" value="InterPro"/>
</dbReference>
<dbReference type="GO" id="GO:0006412">
    <property type="term" value="P:translation"/>
    <property type="evidence" value="ECO:0007669"/>
    <property type="project" value="UniProtKB-UniRule"/>
</dbReference>
<dbReference type="Gene3D" id="3.100.10.10">
    <property type="match status" value="1"/>
</dbReference>
<dbReference type="HAMAP" id="MF_01341">
    <property type="entry name" value="Ribosomal_uL15"/>
    <property type="match status" value="1"/>
</dbReference>
<dbReference type="InterPro" id="IPR030878">
    <property type="entry name" value="Ribosomal_uL15"/>
</dbReference>
<dbReference type="InterPro" id="IPR021131">
    <property type="entry name" value="Ribosomal_uL15/eL18"/>
</dbReference>
<dbReference type="InterPro" id="IPR036227">
    <property type="entry name" value="Ribosomal_uL15/eL18_sf"/>
</dbReference>
<dbReference type="InterPro" id="IPR005749">
    <property type="entry name" value="Ribosomal_uL15_bac-type"/>
</dbReference>
<dbReference type="InterPro" id="IPR001196">
    <property type="entry name" value="Ribosomal_uL15_CS"/>
</dbReference>
<dbReference type="NCBIfam" id="TIGR01071">
    <property type="entry name" value="rplO_bact"/>
    <property type="match status" value="1"/>
</dbReference>
<dbReference type="PANTHER" id="PTHR12934">
    <property type="entry name" value="50S RIBOSOMAL PROTEIN L15"/>
    <property type="match status" value="1"/>
</dbReference>
<dbReference type="PANTHER" id="PTHR12934:SF11">
    <property type="entry name" value="LARGE RIBOSOMAL SUBUNIT PROTEIN UL15M"/>
    <property type="match status" value="1"/>
</dbReference>
<dbReference type="Pfam" id="PF00828">
    <property type="entry name" value="Ribosomal_L27A"/>
    <property type="match status" value="1"/>
</dbReference>
<dbReference type="SUPFAM" id="SSF52080">
    <property type="entry name" value="Ribosomal proteins L15p and L18e"/>
    <property type="match status" value="1"/>
</dbReference>
<dbReference type="PROSITE" id="PS00475">
    <property type="entry name" value="RIBOSOMAL_L15"/>
    <property type="match status" value="1"/>
</dbReference>
<accession>Q7VKF2</accession>
<reference key="1">
    <citation type="submission" date="2003-06" db="EMBL/GenBank/DDBJ databases">
        <title>The complete genome sequence of Haemophilus ducreyi.</title>
        <authorList>
            <person name="Munson R.S. Jr."/>
            <person name="Ray W.C."/>
            <person name="Mahairas G."/>
            <person name="Sabo P."/>
            <person name="Mungur R."/>
            <person name="Johnson L."/>
            <person name="Nguyen D."/>
            <person name="Wang J."/>
            <person name="Forst C."/>
            <person name="Hood L."/>
        </authorList>
    </citation>
    <scope>NUCLEOTIDE SEQUENCE [LARGE SCALE GENOMIC DNA]</scope>
    <source>
        <strain>35000HP / ATCC 700724</strain>
    </source>
</reference>
<name>RL15_HAEDU</name>
<organism>
    <name type="scientific">Haemophilus ducreyi (strain 35000HP / ATCC 700724)</name>
    <dbReference type="NCBI Taxonomy" id="233412"/>
    <lineage>
        <taxon>Bacteria</taxon>
        <taxon>Pseudomonadati</taxon>
        <taxon>Pseudomonadota</taxon>
        <taxon>Gammaproteobacteria</taxon>
        <taxon>Pasteurellales</taxon>
        <taxon>Pasteurellaceae</taxon>
        <taxon>Haemophilus</taxon>
    </lineage>
</organism>
<gene>
    <name evidence="1" type="primary">rplO</name>
    <name type="ordered locus">HD_1959</name>
</gene>
<feature type="chain" id="PRO_0000104729" description="Large ribosomal subunit protein uL15">
    <location>
        <begin position="1"/>
        <end position="144"/>
    </location>
</feature>
<feature type="region of interest" description="Disordered" evidence="2">
    <location>
        <begin position="1"/>
        <end position="52"/>
    </location>
</feature>
<feature type="compositionally biased region" description="Gly residues" evidence="2">
    <location>
        <begin position="21"/>
        <end position="31"/>
    </location>
</feature>
<sequence length="144" mass="15136">MRLNSLSPAEGAKHSAKRLGRGIGSGLGKTGGRGHKGQKSRTGGGVRRGFEGGQMPLYRRLPKFGFTSLKSLHVAEIRLNDLAKVDGNEVTLEALKAANIITKNILSVKVILAGKIERALVIKGLRVTKGAKAAIEAVGGSIEE</sequence>
<evidence type="ECO:0000255" key="1">
    <source>
        <dbReference type="HAMAP-Rule" id="MF_01341"/>
    </source>
</evidence>
<evidence type="ECO:0000256" key="2">
    <source>
        <dbReference type="SAM" id="MobiDB-lite"/>
    </source>
</evidence>
<evidence type="ECO:0000305" key="3"/>
<protein>
    <recommendedName>
        <fullName evidence="1">Large ribosomal subunit protein uL15</fullName>
    </recommendedName>
    <alternativeName>
        <fullName evidence="3">50S ribosomal protein L15</fullName>
    </alternativeName>
</protein>
<comment type="function">
    <text evidence="1">Binds to the 23S rRNA.</text>
</comment>
<comment type="subunit">
    <text evidence="1">Part of the 50S ribosomal subunit.</text>
</comment>
<comment type="similarity">
    <text evidence="1">Belongs to the universal ribosomal protein uL15 family.</text>
</comment>